<name>COWN_WOLSU</name>
<reference key="1">
    <citation type="journal article" date="2003" name="Proc. Natl. Acad. Sci. U.S.A.">
        <title>Complete genome sequence and analysis of Wolinella succinogenes.</title>
        <authorList>
            <person name="Baar C."/>
            <person name="Eppinger M."/>
            <person name="Raddatz G."/>
            <person name="Simon J."/>
            <person name="Lanz C."/>
            <person name="Klimmek O."/>
            <person name="Nandakumar R."/>
            <person name="Gross R."/>
            <person name="Rosinus A."/>
            <person name="Keller H."/>
            <person name="Jagtap P."/>
            <person name="Linke B."/>
            <person name="Meyer F."/>
            <person name="Lederer H."/>
            <person name="Schuster S.C."/>
        </authorList>
    </citation>
    <scope>NUCLEOTIDE SEQUENCE [LARGE SCALE GENOMIC DNA]</scope>
    <source>
        <strain>ATCC 29543 / DSM 1740 / CCUG 13145 / JCM 31913 / LMG 7466 / NCTC 11488 / FDC 602W</strain>
    </source>
</reference>
<feature type="chain" id="PRO_0000407275" description="N(2)-fixation sustaining protein CowN">
    <location>
        <begin position="1"/>
        <end position="113"/>
    </location>
</feature>
<comment type="function">
    <text evidence="1">Is required to sustain N(2)-dependent growth in the presence of low levels of carbon monoxide (CO). Probably acts by protecting the N(2) fixation ability of the nitrogenase complex, which is inactivated in the presence of CO.</text>
</comment>
<comment type="similarity">
    <text evidence="1">Belongs to the CowN family.</text>
</comment>
<sequence length="113" mass="13189">MSSIFINKGVEMMESEKSGGMDRYVTFERIDCFKNAHEVVSNALRVLEANPEMKNPFWEKFCSKIPDSFYSYTPQEDLLYLVCANVFYLEELFDEAEDEEGQAIMSRCEFECC</sequence>
<accession>Q7MRV3</accession>
<keyword id="KW-0535">Nitrogen fixation</keyword>
<keyword id="KW-1185">Reference proteome</keyword>
<gene>
    <name evidence="1" type="primary">cowN</name>
    <name type="ordered locus">WS1017</name>
</gene>
<evidence type="ECO:0000255" key="1">
    <source>
        <dbReference type="HAMAP-Rule" id="MF_02117"/>
    </source>
</evidence>
<proteinExistence type="inferred from homology"/>
<dbReference type="EMBL" id="BX571659">
    <property type="protein sequence ID" value="CAE10119.1"/>
    <property type="molecule type" value="Genomic_DNA"/>
</dbReference>
<dbReference type="STRING" id="273121.WS1017"/>
<dbReference type="KEGG" id="wsu:WS1017"/>
<dbReference type="eggNOG" id="ENOG5032SZ8">
    <property type="taxonomic scope" value="Bacteria"/>
</dbReference>
<dbReference type="HOGENOM" id="CLU_149349_0_0_7"/>
<dbReference type="Proteomes" id="UP000000422">
    <property type="component" value="Chromosome"/>
</dbReference>
<dbReference type="GO" id="GO:0009399">
    <property type="term" value="P:nitrogen fixation"/>
    <property type="evidence" value="ECO:0007669"/>
    <property type="project" value="UniProtKB-KW"/>
</dbReference>
<dbReference type="HAMAP" id="MF_02117">
    <property type="entry name" value="CowN"/>
    <property type="match status" value="1"/>
</dbReference>
<dbReference type="InterPro" id="IPR024899">
    <property type="entry name" value="CowN"/>
</dbReference>
<dbReference type="NCBIfam" id="NF033689">
    <property type="entry name" value="N2Fix_CO_CowN"/>
    <property type="match status" value="1"/>
</dbReference>
<dbReference type="Pfam" id="PF20543">
    <property type="entry name" value="CowN"/>
    <property type="match status" value="1"/>
</dbReference>
<protein>
    <recommendedName>
        <fullName evidence="1">N(2)-fixation sustaining protein CowN</fullName>
    </recommendedName>
    <alternativeName>
        <fullName evidence="1">CO weal-nitrogenase</fullName>
    </alternativeName>
</protein>
<organism>
    <name type="scientific">Wolinella succinogenes (strain ATCC 29543 / DSM 1740 / CCUG 13145 / JCM 31913 / LMG 7466 / NCTC 11488 / FDC 602W)</name>
    <name type="common">Vibrio succinogenes</name>
    <dbReference type="NCBI Taxonomy" id="273121"/>
    <lineage>
        <taxon>Bacteria</taxon>
        <taxon>Pseudomonadati</taxon>
        <taxon>Campylobacterota</taxon>
        <taxon>Epsilonproteobacteria</taxon>
        <taxon>Campylobacterales</taxon>
        <taxon>Helicobacteraceae</taxon>
        <taxon>Wolinella</taxon>
    </lineage>
</organism>